<protein>
    <recommendedName>
        <fullName evidence="2">D-alanine--D-alanine ligase</fullName>
        <ecNumber evidence="2">6.3.2.4</ecNumber>
    </recommendedName>
    <alternativeName>
        <fullName evidence="2">D-Ala-D-Ala ligase</fullName>
    </alternativeName>
    <alternativeName>
        <fullName evidence="2">D-alanylalanine synthetase</fullName>
    </alternativeName>
</protein>
<evidence type="ECO:0000250" key="1"/>
<evidence type="ECO:0000255" key="2">
    <source>
        <dbReference type="HAMAP-Rule" id="MF_00047"/>
    </source>
</evidence>
<comment type="function">
    <text evidence="2">Cell wall formation.</text>
</comment>
<comment type="catalytic activity">
    <reaction evidence="2">
        <text>2 D-alanine + ATP = D-alanyl-D-alanine + ADP + phosphate + H(+)</text>
        <dbReference type="Rhea" id="RHEA:11224"/>
        <dbReference type="ChEBI" id="CHEBI:15378"/>
        <dbReference type="ChEBI" id="CHEBI:30616"/>
        <dbReference type="ChEBI" id="CHEBI:43474"/>
        <dbReference type="ChEBI" id="CHEBI:57416"/>
        <dbReference type="ChEBI" id="CHEBI:57822"/>
        <dbReference type="ChEBI" id="CHEBI:456216"/>
        <dbReference type="EC" id="6.3.2.4"/>
    </reaction>
</comment>
<comment type="cofactor">
    <cofactor evidence="1">
        <name>Mg(2+)</name>
        <dbReference type="ChEBI" id="CHEBI:18420"/>
    </cofactor>
    <cofactor evidence="1">
        <name>Mn(2+)</name>
        <dbReference type="ChEBI" id="CHEBI:29035"/>
    </cofactor>
    <text evidence="1">Binds 2 magnesium or manganese ions per subunit.</text>
</comment>
<comment type="pathway">
    <text evidence="2">Cell wall biogenesis; peptidoglycan biosynthesis.</text>
</comment>
<comment type="subcellular location">
    <subcellularLocation>
        <location evidence="2">Cytoplasm</location>
    </subcellularLocation>
</comment>
<comment type="similarity">
    <text evidence="2">Belongs to the D-alanine--D-alanine ligase family.</text>
</comment>
<dbReference type="EC" id="6.3.2.4" evidence="2"/>
<dbReference type="EMBL" id="CP001358">
    <property type="protein sequence ID" value="ACL48779.1"/>
    <property type="molecule type" value="Genomic_DNA"/>
</dbReference>
<dbReference type="SMR" id="B8IZ52"/>
<dbReference type="STRING" id="525146.Ddes_0872"/>
<dbReference type="KEGG" id="dds:Ddes_0872"/>
<dbReference type="eggNOG" id="COG1181">
    <property type="taxonomic scope" value="Bacteria"/>
</dbReference>
<dbReference type="HOGENOM" id="CLU_039268_1_1_7"/>
<dbReference type="UniPathway" id="UPA00219"/>
<dbReference type="GO" id="GO:0005737">
    <property type="term" value="C:cytoplasm"/>
    <property type="evidence" value="ECO:0007669"/>
    <property type="project" value="UniProtKB-SubCell"/>
</dbReference>
<dbReference type="GO" id="GO:0005524">
    <property type="term" value="F:ATP binding"/>
    <property type="evidence" value="ECO:0007669"/>
    <property type="project" value="UniProtKB-KW"/>
</dbReference>
<dbReference type="GO" id="GO:0008716">
    <property type="term" value="F:D-alanine-D-alanine ligase activity"/>
    <property type="evidence" value="ECO:0007669"/>
    <property type="project" value="UniProtKB-UniRule"/>
</dbReference>
<dbReference type="GO" id="GO:0046872">
    <property type="term" value="F:metal ion binding"/>
    <property type="evidence" value="ECO:0007669"/>
    <property type="project" value="UniProtKB-KW"/>
</dbReference>
<dbReference type="GO" id="GO:0071555">
    <property type="term" value="P:cell wall organization"/>
    <property type="evidence" value="ECO:0007669"/>
    <property type="project" value="UniProtKB-KW"/>
</dbReference>
<dbReference type="GO" id="GO:0009252">
    <property type="term" value="P:peptidoglycan biosynthetic process"/>
    <property type="evidence" value="ECO:0007669"/>
    <property type="project" value="UniProtKB-UniRule"/>
</dbReference>
<dbReference type="GO" id="GO:0008360">
    <property type="term" value="P:regulation of cell shape"/>
    <property type="evidence" value="ECO:0007669"/>
    <property type="project" value="UniProtKB-KW"/>
</dbReference>
<dbReference type="Gene3D" id="3.40.50.20">
    <property type="match status" value="1"/>
</dbReference>
<dbReference type="Gene3D" id="3.30.1490.20">
    <property type="entry name" value="ATP-grasp fold, A domain"/>
    <property type="match status" value="1"/>
</dbReference>
<dbReference type="Gene3D" id="3.30.470.20">
    <property type="entry name" value="ATP-grasp fold, B domain"/>
    <property type="match status" value="1"/>
</dbReference>
<dbReference type="HAMAP" id="MF_00047">
    <property type="entry name" value="Dala_Dala_lig"/>
    <property type="match status" value="1"/>
</dbReference>
<dbReference type="InterPro" id="IPR011761">
    <property type="entry name" value="ATP-grasp"/>
</dbReference>
<dbReference type="InterPro" id="IPR013815">
    <property type="entry name" value="ATP_grasp_subdomain_1"/>
</dbReference>
<dbReference type="InterPro" id="IPR000291">
    <property type="entry name" value="D-Ala_lig_Van_CS"/>
</dbReference>
<dbReference type="InterPro" id="IPR005905">
    <property type="entry name" value="D_ala_D_ala"/>
</dbReference>
<dbReference type="InterPro" id="IPR011095">
    <property type="entry name" value="Dala_Dala_lig_C"/>
</dbReference>
<dbReference type="InterPro" id="IPR016185">
    <property type="entry name" value="PreATP-grasp_dom_sf"/>
</dbReference>
<dbReference type="NCBIfam" id="NF002378">
    <property type="entry name" value="PRK01372.1"/>
    <property type="match status" value="1"/>
</dbReference>
<dbReference type="PANTHER" id="PTHR23132">
    <property type="entry name" value="D-ALANINE--D-ALANINE LIGASE"/>
    <property type="match status" value="1"/>
</dbReference>
<dbReference type="PANTHER" id="PTHR23132:SF23">
    <property type="entry name" value="D-ALANINE--D-ALANINE LIGASE B"/>
    <property type="match status" value="1"/>
</dbReference>
<dbReference type="Pfam" id="PF07478">
    <property type="entry name" value="Dala_Dala_lig_C"/>
    <property type="match status" value="1"/>
</dbReference>
<dbReference type="PIRSF" id="PIRSF039102">
    <property type="entry name" value="Ddl/VanB"/>
    <property type="match status" value="1"/>
</dbReference>
<dbReference type="SUPFAM" id="SSF56059">
    <property type="entry name" value="Glutathione synthetase ATP-binding domain-like"/>
    <property type="match status" value="1"/>
</dbReference>
<dbReference type="SUPFAM" id="SSF52440">
    <property type="entry name" value="PreATP-grasp domain"/>
    <property type="match status" value="1"/>
</dbReference>
<dbReference type="PROSITE" id="PS50975">
    <property type="entry name" value="ATP_GRASP"/>
    <property type="match status" value="1"/>
</dbReference>
<dbReference type="PROSITE" id="PS00843">
    <property type="entry name" value="DALA_DALA_LIGASE_1"/>
    <property type="match status" value="1"/>
</dbReference>
<dbReference type="PROSITE" id="PS00844">
    <property type="entry name" value="DALA_DALA_LIGASE_2"/>
    <property type="match status" value="1"/>
</dbReference>
<name>DDL_DESDA</name>
<organism>
    <name type="scientific">Desulfovibrio desulfuricans (strain ATCC 27774 / DSM 6949 / MB)</name>
    <dbReference type="NCBI Taxonomy" id="525146"/>
    <lineage>
        <taxon>Bacteria</taxon>
        <taxon>Pseudomonadati</taxon>
        <taxon>Thermodesulfobacteriota</taxon>
        <taxon>Desulfovibrionia</taxon>
        <taxon>Desulfovibrionales</taxon>
        <taxon>Desulfovibrionaceae</taxon>
        <taxon>Desulfovibrio</taxon>
    </lineage>
</organism>
<reference key="1">
    <citation type="submission" date="2009-01" db="EMBL/GenBank/DDBJ databases">
        <title>Complete sequence of Desulfovibrio desulfuricans subsp. desulfuricans str. ATCC 27774.</title>
        <authorList>
            <consortium name="US DOE Joint Genome Institute"/>
            <person name="Lucas S."/>
            <person name="Copeland A."/>
            <person name="Lapidus A."/>
            <person name="Glavina del Rio T."/>
            <person name="Tice H."/>
            <person name="Bruce D."/>
            <person name="Goodwin L."/>
            <person name="Pitluck S."/>
            <person name="Sims D."/>
            <person name="Lu M."/>
            <person name="Kiss H."/>
            <person name="Meineke L."/>
            <person name="Brettin T."/>
            <person name="Detter J.C."/>
            <person name="Han C."/>
            <person name="Larimer F."/>
            <person name="Land M."/>
            <person name="Hauser L."/>
            <person name="Kyrpides N."/>
            <person name="Ovchinnikova G."/>
            <person name="Hazen T.C."/>
        </authorList>
    </citation>
    <scope>NUCLEOTIDE SEQUENCE [LARGE SCALE GENOMIC DNA]</scope>
    <source>
        <strain>ATCC 27774 / DSM 6949 / MB</strain>
    </source>
</reference>
<accession>B8IZ52</accession>
<proteinExistence type="inferred from homology"/>
<gene>
    <name evidence="2" type="primary">ddl</name>
    <name type="ordered locus">Ddes_0872</name>
</gene>
<keyword id="KW-0067">ATP-binding</keyword>
<keyword id="KW-0133">Cell shape</keyword>
<keyword id="KW-0961">Cell wall biogenesis/degradation</keyword>
<keyword id="KW-0963">Cytoplasm</keyword>
<keyword id="KW-0436">Ligase</keyword>
<keyword id="KW-0460">Magnesium</keyword>
<keyword id="KW-0464">Manganese</keyword>
<keyword id="KW-0479">Metal-binding</keyword>
<keyword id="KW-0547">Nucleotide-binding</keyword>
<keyword id="KW-0573">Peptidoglycan synthesis</keyword>
<sequence>MKILLIAGGWSPERQVSLNGARAMVPALEARGHEVTFFDLLENFNGLLAAAEQHDFALINLHGAPGEDGLVQAMLDQVGCPYQGAGPAGSFLALNKCAAKQIFRRAGLPTADWDFVPAFPGKDWQPRLPYPLFVKSNTGGSSLRLGRARNRAELDDIMGQIFAAGEEVIMEPVLPGREVTCGILGEDPLPPILIEPVAGDFFNYESKYEQDGARELCPAPIGDELTARVQELTLAAHRALGLRGYSRADFILGPDDSLTLLEVNTLPGMTATSLVPREARTIGLDFGQLLERLMELGLADCKKKQM</sequence>
<feature type="chain" id="PRO_1000189735" description="D-alanine--D-alanine ligase">
    <location>
        <begin position="1"/>
        <end position="306"/>
    </location>
</feature>
<feature type="domain" description="ATP-grasp" evidence="2">
    <location>
        <begin position="100"/>
        <end position="295"/>
    </location>
</feature>
<feature type="binding site" evidence="2">
    <location>
        <begin position="127"/>
        <end position="180"/>
    </location>
    <ligand>
        <name>ATP</name>
        <dbReference type="ChEBI" id="CHEBI:30616"/>
    </ligand>
</feature>
<feature type="binding site" evidence="2">
    <location>
        <position position="249"/>
    </location>
    <ligand>
        <name>Mg(2+)</name>
        <dbReference type="ChEBI" id="CHEBI:18420"/>
        <label>1</label>
    </ligand>
</feature>
<feature type="binding site" evidence="2">
    <location>
        <position position="262"/>
    </location>
    <ligand>
        <name>Mg(2+)</name>
        <dbReference type="ChEBI" id="CHEBI:18420"/>
        <label>1</label>
    </ligand>
</feature>
<feature type="binding site" evidence="2">
    <location>
        <position position="262"/>
    </location>
    <ligand>
        <name>Mg(2+)</name>
        <dbReference type="ChEBI" id="CHEBI:18420"/>
        <label>2</label>
    </ligand>
</feature>
<feature type="binding site" evidence="2">
    <location>
        <position position="264"/>
    </location>
    <ligand>
        <name>Mg(2+)</name>
        <dbReference type="ChEBI" id="CHEBI:18420"/>
        <label>2</label>
    </ligand>
</feature>